<dbReference type="EC" id="2.4.2.22" evidence="1"/>
<dbReference type="EMBL" id="AE005176">
    <property type="protein sequence ID" value="AAK05244.1"/>
    <property type="molecule type" value="Genomic_DNA"/>
</dbReference>
<dbReference type="PIR" id="B86768">
    <property type="entry name" value="B86768"/>
</dbReference>
<dbReference type="RefSeq" id="NP_267302.1">
    <property type="nucleotide sequence ID" value="NC_002662.1"/>
</dbReference>
<dbReference type="RefSeq" id="WP_003132093.1">
    <property type="nucleotide sequence ID" value="NC_002662.1"/>
</dbReference>
<dbReference type="SMR" id="Q9CGF0"/>
<dbReference type="PaxDb" id="272623-L159396"/>
<dbReference type="EnsemblBacteria" id="AAK05244">
    <property type="protein sequence ID" value="AAK05244"/>
    <property type="gene ID" value="L159396"/>
</dbReference>
<dbReference type="KEGG" id="lla:L159396"/>
<dbReference type="PATRIC" id="fig|272623.7.peg.1225"/>
<dbReference type="eggNOG" id="COG0503">
    <property type="taxonomic scope" value="Bacteria"/>
</dbReference>
<dbReference type="HOGENOM" id="CLU_099015_0_0_9"/>
<dbReference type="OrthoDB" id="9790678at2"/>
<dbReference type="UniPathway" id="UPA00602">
    <property type="reaction ID" value="UER00658"/>
</dbReference>
<dbReference type="Proteomes" id="UP000002196">
    <property type="component" value="Chromosome"/>
</dbReference>
<dbReference type="GO" id="GO:0005737">
    <property type="term" value="C:cytoplasm"/>
    <property type="evidence" value="ECO:0007669"/>
    <property type="project" value="UniProtKB-SubCell"/>
</dbReference>
<dbReference type="GO" id="GO:0000310">
    <property type="term" value="F:xanthine phosphoribosyltransferase activity"/>
    <property type="evidence" value="ECO:0007669"/>
    <property type="project" value="UniProtKB-UniRule"/>
</dbReference>
<dbReference type="GO" id="GO:0006166">
    <property type="term" value="P:purine ribonucleoside salvage"/>
    <property type="evidence" value="ECO:0007669"/>
    <property type="project" value="UniProtKB-KW"/>
</dbReference>
<dbReference type="GO" id="GO:0046110">
    <property type="term" value="P:xanthine metabolic process"/>
    <property type="evidence" value="ECO:0007669"/>
    <property type="project" value="InterPro"/>
</dbReference>
<dbReference type="GO" id="GO:0032265">
    <property type="term" value="P:XMP salvage"/>
    <property type="evidence" value="ECO:0007669"/>
    <property type="project" value="UniProtKB-UniRule"/>
</dbReference>
<dbReference type="CDD" id="cd06223">
    <property type="entry name" value="PRTases_typeI"/>
    <property type="match status" value="1"/>
</dbReference>
<dbReference type="Gene3D" id="3.40.50.2020">
    <property type="match status" value="1"/>
</dbReference>
<dbReference type="HAMAP" id="MF_01184">
    <property type="entry name" value="XPRTase"/>
    <property type="match status" value="1"/>
</dbReference>
<dbReference type="InterPro" id="IPR000836">
    <property type="entry name" value="PRibTrfase_dom"/>
</dbReference>
<dbReference type="InterPro" id="IPR029057">
    <property type="entry name" value="PRTase-like"/>
</dbReference>
<dbReference type="InterPro" id="IPR050118">
    <property type="entry name" value="Pur/Pyrimidine_PRTase"/>
</dbReference>
<dbReference type="InterPro" id="IPR010079">
    <property type="entry name" value="Xanthine_PRibTrfase"/>
</dbReference>
<dbReference type="NCBIfam" id="NF006671">
    <property type="entry name" value="PRK09219.1"/>
    <property type="match status" value="1"/>
</dbReference>
<dbReference type="NCBIfam" id="TIGR01744">
    <property type="entry name" value="XPRTase"/>
    <property type="match status" value="1"/>
</dbReference>
<dbReference type="PANTHER" id="PTHR43864">
    <property type="entry name" value="HYPOXANTHINE/GUANINE PHOSPHORIBOSYLTRANSFERASE"/>
    <property type="match status" value="1"/>
</dbReference>
<dbReference type="PANTHER" id="PTHR43864:SF1">
    <property type="entry name" value="XANTHINE PHOSPHORIBOSYLTRANSFERASE"/>
    <property type="match status" value="1"/>
</dbReference>
<dbReference type="Pfam" id="PF00156">
    <property type="entry name" value="Pribosyltran"/>
    <property type="match status" value="1"/>
</dbReference>
<dbReference type="SUPFAM" id="SSF53271">
    <property type="entry name" value="PRTase-like"/>
    <property type="match status" value="1"/>
</dbReference>
<proteinExistence type="inferred from homology"/>
<evidence type="ECO:0000255" key="1">
    <source>
        <dbReference type="HAMAP-Rule" id="MF_01184"/>
    </source>
</evidence>
<comment type="function">
    <text evidence="1">Converts the preformed base xanthine, a product of nucleic acid breakdown, to xanthosine 5'-monophosphate (XMP), so it can be reused for RNA or DNA synthesis.</text>
</comment>
<comment type="catalytic activity">
    <reaction evidence="1">
        <text>XMP + diphosphate = xanthine + 5-phospho-alpha-D-ribose 1-diphosphate</text>
        <dbReference type="Rhea" id="RHEA:10800"/>
        <dbReference type="ChEBI" id="CHEBI:17712"/>
        <dbReference type="ChEBI" id="CHEBI:33019"/>
        <dbReference type="ChEBI" id="CHEBI:57464"/>
        <dbReference type="ChEBI" id="CHEBI:58017"/>
        <dbReference type="EC" id="2.4.2.22"/>
    </reaction>
</comment>
<comment type="pathway">
    <text evidence="1">Purine metabolism; XMP biosynthesis via salvage pathway; XMP from xanthine: step 1/1.</text>
</comment>
<comment type="subunit">
    <text evidence="1">Homodimer.</text>
</comment>
<comment type="subcellular location">
    <subcellularLocation>
        <location evidence="1">Cytoplasm</location>
    </subcellularLocation>
</comment>
<comment type="similarity">
    <text evidence="1">Belongs to the purine/pyrimidine phosphoribosyltransferase family. Xpt subfamily.</text>
</comment>
<feature type="chain" id="PRO_0000339715" description="Xanthine phosphoribosyltransferase">
    <location>
        <begin position="1"/>
        <end position="197"/>
    </location>
</feature>
<feature type="binding site" evidence="1">
    <location>
        <position position="20"/>
    </location>
    <ligand>
        <name>xanthine</name>
        <dbReference type="ChEBI" id="CHEBI:17712"/>
    </ligand>
</feature>
<feature type="binding site" evidence="1">
    <location>
        <position position="27"/>
    </location>
    <ligand>
        <name>xanthine</name>
        <dbReference type="ChEBI" id="CHEBI:17712"/>
    </ligand>
</feature>
<feature type="binding site" evidence="1">
    <location>
        <begin position="128"/>
        <end position="132"/>
    </location>
    <ligand>
        <name>5-phospho-alpha-D-ribose 1-diphosphate</name>
        <dbReference type="ChEBI" id="CHEBI:58017"/>
    </ligand>
</feature>
<feature type="binding site" evidence="1">
    <location>
        <position position="156"/>
    </location>
    <ligand>
        <name>xanthine</name>
        <dbReference type="ChEBI" id="CHEBI:17712"/>
    </ligand>
</feature>
<organism>
    <name type="scientific">Lactococcus lactis subsp. lactis (strain IL1403)</name>
    <name type="common">Streptococcus lactis</name>
    <dbReference type="NCBI Taxonomy" id="272623"/>
    <lineage>
        <taxon>Bacteria</taxon>
        <taxon>Bacillati</taxon>
        <taxon>Bacillota</taxon>
        <taxon>Bacilli</taxon>
        <taxon>Lactobacillales</taxon>
        <taxon>Streptococcaceae</taxon>
        <taxon>Lactococcus</taxon>
    </lineage>
</organism>
<gene>
    <name evidence="1" type="primary">xpt</name>
    <name type="ordered locus">LL1146</name>
    <name type="ORF">L159396</name>
</gene>
<name>XPT_LACLA</name>
<reference key="1">
    <citation type="journal article" date="2001" name="Genome Res.">
        <title>The complete genome sequence of the lactic acid bacterium Lactococcus lactis ssp. lactis IL1403.</title>
        <authorList>
            <person name="Bolotin A."/>
            <person name="Wincker P."/>
            <person name="Mauger S."/>
            <person name="Jaillon O."/>
            <person name="Malarme K."/>
            <person name="Weissenbach J."/>
            <person name="Ehrlich S.D."/>
            <person name="Sorokin A."/>
        </authorList>
    </citation>
    <scope>NUCLEOTIDE SEQUENCE [LARGE SCALE GENOMIC DNA]</scope>
    <source>
        <strain>IL1403</strain>
    </source>
</reference>
<protein>
    <recommendedName>
        <fullName evidence="1">Xanthine phosphoribosyltransferase</fullName>
        <shortName evidence="1">XPRTase</shortName>
        <ecNumber evidence="1">2.4.2.22</ecNumber>
    </recommendedName>
</protein>
<accession>Q9CGF0</accession>
<keyword id="KW-0963">Cytoplasm</keyword>
<keyword id="KW-0328">Glycosyltransferase</keyword>
<keyword id="KW-0660">Purine salvage</keyword>
<keyword id="KW-1185">Reference proteome</keyword>
<keyword id="KW-0808">Transferase</keyword>
<sequence length="197" mass="21806">MKLLEDRIHTDGQVLGQDILKVDRFLTHQVDYQLMKEIGKRFAQVYANAGVTKVVTIEASGIAPALYAAESLNVPMIFAKKAKNVTMNDDLLITEVYSFTKKLTSTVQISSKLIEEGDKVLIIDDFLANGQAALGLVHLMEQAKAEVVGLGMVIEKSFQDGRQKLLDQGMKLTSLARIEKFEDGKVIFAPADDKDFD</sequence>